<reference key="1">
    <citation type="journal article" date="1995" name="Genomics">
        <title>Genetic mapping of the mouse genes encoding the voltage-sensitive calcium channel subunits.</title>
        <authorList>
            <person name="Chin H."/>
            <person name="Kwon O.-J."/>
            <person name="Jung H.H."/>
            <person name="Kim D.S."/>
            <person name="Kozak C.A."/>
        </authorList>
    </citation>
    <scope>NUCLEOTIDE SEQUENCE [MRNA] (ISOFORM 3A)</scope>
</reference>
<reference key="2">
    <citation type="journal article" date="1996" name="Eur. J. Biochem.">
        <title>Gene structure of the murine calcium channel beta3 subunit, cDNA and characterization of alternative splicing and transcription products.</title>
        <authorList>
            <person name="Murakami M."/>
            <person name="Wissenbach U."/>
            <person name="Flockerzi V."/>
        </authorList>
    </citation>
    <scope>NUCLEOTIDE SEQUENCE [GENOMIC DNA]</scope>
    <scope>ALTERNATIVE SPLICING</scope>
    <source>
        <strain>129/SvJ</strain>
    </source>
</reference>
<reference key="3">
    <citation type="journal article" date="2009" name="PLoS Biol.">
        <title>Lineage-specific biology revealed by a finished genome assembly of the mouse.</title>
        <authorList>
            <person name="Church D.M."/>
            <person name="Goodstadt L."/>
            <person name="Hillier L.W."/>
            <person name="Zody M.C."/>
            <person name="Goldstein S."/>
            <person name="She X."/>
            <person name="Bult C.J."/>
            <person name="Agarwala R."/>
            <person name="Cherry J.L."/>
            <person name="DiCuccio M."/>
            <person name="Hlavina W."/>
            <person name="Kapustin Y."/>
            <person name="Meric P."/>
            <person name="Maglott D."/>
            <person name="Birtle Z."/>
            <person name="Marques A.C."/>
            <person name="Graves T."/>
            <person name="Zhou S."/>
            <person name="Teague B."/>
            <person name="Potamousis K."/>
            <person name="Churas C."/>
            <person name="Place M."/>
            <person name="Herschleb J."/>
            <person name="Runnheim R."/>
            <person name="Forrest D."/>
            <person name="Amos-Landgraf J."/>
            <person name="Schwartz D.C."/>
            <person name="Cheng Z."/>
            <person name="Lindblad-Toh K."/>
            <person name="Eichler E.E."/>
            <person name="Ponting C.P."/>
        </authorList>
    </citation>
    <scope>NUCLEOTIDE SEQUENCE [LARGE SCALE GENOMIC DNA]</scope>
    <source>
        <strain>C57BL/6J</strain>
    </source>
</reference>
<reference key="4">
    <citation type="submission" date="2005-07" db="EMBL/GenBank/DDBJ databases">
        <authorList>
            <person name="Mural R.J."/>
            <person name="Adams M.D."/>
            <person name="Myers E.W."/>
            <person name="Smith H.O."/>
            <person name="Venter J.C."/>
        </authorList>
    </citation>
    <scope>NUCLEOTIDE SEQUENCE [LARGE SCALE GENOMIC DNA]</scope>
</reference>
<reference key="5">
    <citation type="journal article" date="2011" name="Brain Res.">
        <title>Distribution of voltage gated calcium channel beta subunits in the mouse retina.</title>
        <authorList>
            <person name="Ball S.L."/>
            <person name="McEnery M.W."/>
            <person name="Yunker A.M."/>
            <person name="Shin H.S."/>
            <person name="Gregg R.G."/>
        </authorList>
    </citation>
    <scope>TISSUE SPECIFICITY</scope>
    <scope>SUBCELLULAR LOCATION</scope>
</reference>
<reference key="6">
    <citation type="journal article" date="2014" name="J. Cell Biol.">
        <title>BARP suppresses voltage-gated calcium channel activity and Ca2+-evoked exocytosis.</title>
        <authorList>
            <person name="Beguin P."/>
            <person name="Nagashima K."/>
            <person name="Mahalakshmi R.N."/>
            <person name="Vigot R."/>
            <person name="Matsunaga A."/>
            <person name="Miki T."/>
            <person name="Ng M.Y."/>
            <person name="Ng Y.J."/>
            <person name="Lim C.H."/>
            <person name="Tay H.S."/>
            <person name="Hwang L.A."/>
            <person name="Firsov D."/>
            <person name="Tang B.L."/>
            <person name="Inagaki N."/>
            <person name="Mori Y."/>
            <person name="Seino S."/>
            <person name="Launey T."/>
            <person name="Hunziker W."/>
        </authorList>
    </citation>
    <scope>INTERACTION WITH CBARP</scope>
    <scope>FUNCTION</scope>
</reference>
<accession>P54285</accession>
<accession>G5E821</accession>
<evidence type="ECO:0000250" key="1">
    <source>
        <dbReference type="UniProtKB" id="P54284"/>
    </source>
</evidence>
<evidence type="ECO:0000250" key="2">
    <source>
        <dbReference type="UniProtKB" id="P54287"/>
    </source>
</evidence>
<evidence type="ECO:0000250" key="3">
    <source>
        <dbReference type="UniProtKB" id="Q9MZL3"/>
    </source>
</evidence>
<evidence type="ECO:0000255" key="4">
    <source>
        <dbReference type="PROSITE-ProRule" id="PRU00192"/>
    </source>
</evidence>
<evidence type="ECO:0000256" key="5">
    <source>
        <dbReference type="SAM" id="MobiDB-lite"/>
    </source>
</evidence>
<evidence type="ECO:0000269" key="6">
    <source>
    </source>
</evidence>
<evidence type="ECO:0000269" key="7">
    <source>
    </source>
</evidence>
<evidence type="ECO:0000305" key="8"/>
<evidence type="ECO:0000305" key="9">
    <source>
    </source>
</evidence>
<feature type="chain" id="PRO_0000144057" description="Voltage-dependent L-type calcium channel subunit beta-3">
    <location>
        <begin position="1"/>
        <end position="484"/>
    </location>
</feature>
<feature type="domain" description="SH3" evidence="4">
    <location>
        <begin position="59"/>
        <end position="128"/>
    </location>
</feature>
<feature type="region of interest" description="Disordered" evidence="5">
    <location>
        <begin position="1"/>
        <end position="52"/>
    </location>
</feature>
<feature type="region of interest" description="Disordered" evidence="5">
    <location>
        <begin position="129"/>
        <end position="170"/>
    </location>
</feature>
<feature type="region of interest" description="Mediates interaction with the alpha subunit" evidence="2">
    <location>
        <begin position="195"/>
        <end position="345"/>
    </location>
</feature>
<feature type="region of interest" description="Disordered" evidence="5">
    <location>
        <begin position="390"/>
        <end position="484"/>
    </location>
</feature>
<feature type="compositionally biased region" description="Basic and acidic residues" evidence="5">
    <location>
        <begin position="390"/>
        <end position="399"/>
    </location>
</feature>
<feature type="compositionally biased region" description="Polar residues" evidence="5">
    <location>
        <begin position="409"/>
        <end position="420"/>
    </location>
</feature>
<feature type="compositionally biased region" description="Basic and acidic residues" evidence="5">
    <location>
        <begin position="463"/>
        <end position="484"/>
    </location>
</feature>
<feature type="modified residue" description="Phosphoserine" evidence="2">
    <location>
        <position position="152"/>
    </location>
</feature>
<feature type="modified residue" description="Phosphoserine" evidence="2">
    <location>
        <position position="393"/>
    </location>
</feature>
<feature type="sequence conflict" description="In Ref. 1; AAA91105." evidence="8" ref="1">
    <original>G</original>
    <variation>A</variation>
    <location>
        <position position="82"/>
    </location>
</feature>
<feature type="sequence conflict" description="In Ref. 1; AAA91105." evidence="8" ref="1">
    <original>D</original>
    <variation>A</variation>
    <location>
        <position position="114"/>
    </location>
</feature>
<feature type="sequence conflict" description="In Ref. 1; AAA91105." evidence="8" ref="1">
    <original>N</original>
    <variation>F</variation>
    <location>
        <position position="149"/>
    </location>
</feature>
<feature type="sequence conflict" description="In Ref. 1; AAA91105." evidence="8" ref="1">
    <original>V</original>
    <variation>A</variation>
    <location>
        <position position="335"/>
    </location>
</feature>
<feature type="sequence conflict" description="In Ref. 1; AAA91105." evidence="8" ref="1">
    <original>L</original>
    <variation>Q</variation>
    <location>
        <position position="384"/>
    </location>
</feature>
<feature type="sequence conflict" description="In Ref. 2; CAB61648." evidence="8" ref="2">
    <original>S</original>
    <variation>T</variation>
    <location>
        <position position="409"/>
    </location>
</feature>
<feature type="sequence conflict" description="In Ref. 2; CAB61648." evidence="8" ref="2">
    <original>S</original>
    <variation>T</variation>
    <location>
        <position position="421"/>
    </location>
</feature>
<sequence>MYDDSYVPGFEDSEAGSADSYTSRPSLDSDVSLEEDRESARREVESQAQQQLERAKHKPVAFAVRTNVSYCGVLDEECPVQGSGVNFEAKDFLHIKEKYSNDWWIGRLVKEGGDIAFIPSPQRLESIRLKQEQKARRSGNPSSLGDIGNRRSPPPSLAKQKQKQAEHVPPYDVVPSMRPVVLVGPSLKGYEVTDMMQKALFDFLKHRFDGRISITRVTADLSLAKRSVLNNPGKRTIIERSSARSSIAEVQSEIERIFELAKSLQLVVLDADTINHPAQLAKTSLAPIIVFVKVSSPKVLQRLIRSRGKSQMKHLTVQMMAYDKLVQCPPESFDVILDENQLEDACEHLAEYLEVYWRATHHPAPGPGLLGPPSAIPGLQNQQLLGERVEEHSPLERDSLMPSDEASESSRQAWTGSSQRSSRHLEEDYADAYQDLYQPHRQHTSGLPSANGHDPQDRLLAQDSEHDHNDRNWQRNRPWPKDSY</sequence>
<name>CACB3_MOUSE</name>
<comment type="function">
    <text evidence="2 3 7">Regulatory subunit of the voltage-gated calcium channel that gives rise to L-type calcium currents (PubMed:24751537). Increases CACNA1B peak calcium current and shifts the voltage dependencies of channel activation and inactivation (By similarity). Increases CACNA1C peak calcium current and shifts the voltage dependencies of channel activation and inactivation (By similarity).</text>
</comment>
<comment type="subunit">
    <text evidence="1 7">Component of a calcium channel complex consisting of a pore-forming alpha subunit (CACNA1C) and the ancillary subunits CACNB3 and CACNA2D1. The channel complex contains alpha, beta, gamma and delta subunits in a 1:1:1:1 ratio. Interacts with CACNA2D4. Interacts with FASLG (By similarity). Interacts with CBARP; prevents the interaction of CACNB3 with the alpha subunit CACNA1C thereby negatively regulating the activity of the corresponding calcium channel (PubMed:24751537).</text>
</comment>
<comment type="subcellular location">
    <subcellularLocation>
        <location evidence="9">Cytoplasm</location>
    </subcellularLocation>
</comment>
<comment type="alternative products">
    <event type="alternative splicing"/>
    <isoform>
        <id>P54285-1</id>
        <name>3A</name>
        <sequence type="displayed"/>
    </isoform>
    <isoform>
        <id>P54285-2</id>
        <name>3B</name>
        <sequence type="not described"/>
    </isoform>
</comment>
<comment type="tissue specificity">
    <text evidence="6">Detected in the inner plexiform layer in the retina (at protein level).</text>
</comment>
<comment type="similarity">
    <text evidence="8">Belongs to the calcium channel beta subunit family.</text>
</comment>
<protein>
    <recommendedName>
        <fullName>Voltage-dependent L-type calcium channel subunit beta-3</fullName>
        <shortName>CAB3</shortName>
    </recommendedName>
    <alternativeName>
        <fullName>Calcium channel voltage-dependent subunit beta 3</fullName>
        <shortName>CCHB3</shortName>
    </alternativeName>
</protein>
<proteinExistence type="evidence at protein level"/>
<organism>
    <name type="scientific">Mus musculus</name>
    <name type="common">Mouse</name>
    <dbReference type="NCBI Taxonomy" id="10090"/>
    <lineage>
        <taxon>Eukaryota</taxon>
        <taxon>Metazoa</taxon>
        <taxon>Chordata</taxon>
        <taxon>Craniata</taxon>
        <taxon>Vertebrata</taxon>
        <taxon>Euteleostomi</taxon>
        <taxon>Mammalia</taxon>
        <taxon>Eutheria</taxon>
        <taxon>Euarchontoglires</taxon>
        <taxon>Glires</taxon>
        <taxon>Rodentia</taxon>
        <taxon>Myomorpha</taxon>
        <taxon>Muroidea</taxon>
        <taxon>Muridae</taxon>
        <taxon>Murinae</taxon>
        <taxon>Mus</taxon>
        <taxon>Mus</taxon>
    </lineage>
</organism>
<dbReference type="EMBL" id="U20372">
    <property type="protein sequence ID" value="AAA91105.1"/>
    <property type="molecule type" value="mRNA"/>
</dbReference>
<dbReference type="EMBL" id="X94404">
    <property type="protein sequence ID" value="CAB61648.1"/>
    <property type="molecule type" value="Genomic_DNA"/>
</dbReference>
<dbReference type="EMBL" id="X94406">
    <property type="protein sequence ID" value="CAB61648.1"/>
    <property type="status" value="JOINED"/>
    <property type="molecule type" value="Genomic_DNA"/>
</dbReference>
<dbReference type="EMBL" id="X94405">
    <property type="protein sequence ID" value="CAB61648.1"/>
    <property type="status" value="JOINED"/>
    <property type="molecule type" value="Genomic_DNA"/>
</dbReference>
<dbReference type="EMBL" id="AC156543">
    <property type="status" value="NOT_ANNOTATED_CDS"/>
    <property type="molecule type" value="Genomic_DNA"/>
</dbReference>
<dbReference type="EMBL" id="CH466550">
    <property type="protein sequence ID" value="EDL04179.1"/>
    <property type="molecule type" value="Genomic_DNA"/>
</dbReference>
<dbReference type="CCDS" id="CCDS27800.1">
    <molecule id="P54285-1"/>
</dbReference>
<dbReference type="PIR" id="S62185">
    <property type="entry name" value="S62185"/>
</dbReference>
<dbReference type="RefSeq" id="NP_031607.2">
    <molecule id="P54285-1"/>
    <property type="nucleotide sequence ID" value="NM_007581.4"/>
</dbReference>
<dbReference type="RefSeq" id="XP_036014990.1">
    <molecule id="P54285-1"/>
    <property type="nucleotide sequence ID" value="XM_036159097.1"/>
</dbReference>
<dbReference type="SMR" id="P54285"/>
<dbReference type="BioGRID" id="198441">
    <property type="interactions" value="7"/>
</dbReference>
<dbReference type="FunCoup" id="P54285">
    <property type="interactions" value="859"/>
</dbReference>
<dbReference type="IntAct" id="P54285">
    <property type="interactions" value="3"/>
</dbReference>
<dbReference type="MINT" id="P54285"/>
<dbReference type="STRING" id="10090.ENSMUSP00000155514"/>
<dbReference type="GlyGen" id="P54285">
    <property type="glycosylation" value="2 sites, 1 O-linked glycan (2 sites)"/>
</dbReference>
<dbReference type="iPTMnet" id="P54285"/>
<dbReference type="PhosphoSitePlus" id="P54285"/>
<dbReference type="jPOST" id="P54285"/>
<dbReference type="PaxDb" id="10090-ENSMUSP00000003442"/>
<dbReference type="ProteomicsDB" id="265488">
    <molecule id="P54285-1"/>
</dbReference>
<dbReference type="Pumba" id="P54285"/>
<dbReference type="Antibodypedia" id="13690">
    <property type="antibodies" value="211 antibodies from 30 providers"/>
</dbReference>
<dbReference type="DNASU" id="12297"/>
<dbReference type="Ensembl" id="ENSMUST00000230490.2">
    <molecule id="P54285-1"/>
    <property type="protein sequence ID" value="ENSMUSP00000155514.2"/>
    <property type="gene ID" value="ENSMUSG00000003352.15"/>
</dbReference>
<dbReference type="GeneID" id="12297"/>
<dbReference type="KEGG" id="mmu:12297"/>
<dbReference type="UCSC" id="uc007xnc.2">
    <molecule id="P54285-1"/>
    <property type="organism name" value="mouse"/>
</dbReference>
<dbReference type="AGR" id="MGI:103307"/>
<dbReference type="CTD" id="784"/>
<dbReference type="MGI" id="MGI:103307">
    <property type="gene designation" value="Cacnb3"/>
</dbReference>
<dbReference type="VEuPathDB" id="HostDB:ENSMUSG00000003352"/>
<dbReference type="eggNOG" id="KOG3812">
    <property type="taxonomic scope" value="Eukaryota"/>
</dbReference>
<dbReference type="GeneTree" id="ENSGT00950000182837"/>
<dbReference type="HOGENOM" id="CLU_021995_0_1_1"/>
<dbReference type="InParanoid" id="P54285"/>
<dbReference type="OMA" id="MGEHESE"/>
<dbReference type="OrthoDB" id="5962384at2759"/>
<dbReference type="PhylomeDB" id="P54285"/>
<dbReference type="TreeFam" id="TF316195"/>
<dbReference type="Reactome" id="R-MMU-112308">
    <property type="pathway name" value="Presynaptic depolarization and calcium channel opening"/>
</dbReference>
<dbReference type="Reactome" id="R-MMU-422356">
    <property type="pathway name" value="Regulation of insulin secretion"/>
</dbReference>
<dbReference type="BioGRID-ORCS" id="12297">
    <property type="hits" value="4 hits in 79 CRISPR screens"/>
</dbReference>
<dbReference type="CD-CODE" id="CE726F99">
    <property type="entry name" value="Postsynaptic density"/>
</dbReference>
<dbReference type="ChiTaRS" id="Cacnb3">
    <property type="organism name" value="mouse"/>
</dbReference>
<dbReference type="PRO" id="PR:P54285"/>
<dbReference type="Proteomes" id="UP000000589">
    <property type="component" value="Chromosome 15"/>
</dbReference>
<dbReference type="RNAct" id="P54285">
    <property type="molecule type" value="protein"/>
</dbReference>
<dbReference type="Bgee" id="ENSMUSG00000003352">
    <property type="expression patterns" value="Expressed in habenula and 238 other cell types or tissues"/>
</dbReference>
<dbReference type="ExpressionAtlas" id="P54285">
    <property type="expression patterns" value="baseline and differential"/>
</dbReference>
<dbReference type="GO" id="GO:0005737">
    <property type="term" value="C:cytoplasm"/>
    <property type="evidence" value="ECO:0007669"/>
    <property type="project" value="UniProtKB-SubCell"/>
</dbReference>
<dbReference type="GO" id="GO:1990454">
    <property type="term" value="C:L-type voltage-gated calcium channel complex"/>
    <property type="evidence" value="ECO:0000250"/>
    <property type="project" value="BHF-UCL"/>
</dbReference>
<dbReference type="GO" id="GO:0005886">
    <property type="term" value="C:plasma membrane"/>
    <property type="evidence" value="ECO:0000304"/>
    <property type="project" value="Reactome"/>
</dbReference>
<dbReference type="GO" id="GO:0005891">
    <property type="term" value="C:voltage-gated calcium channel complex"/>
    <property type="evidence" value="ECO:0000314"/>
    <property type="project" value="MGI"/>
</dbReference>
<dbReference type="GO" id="GO:0005246">
    <property type="term" value="F:calcium channel regulator activity"/>
    <property type="evidence" value="ECO:0000250"/>
    <property type="project" value="UniProtKB"/>
</dbReference>
<dbReference type="GO" id="GO:0008331">
    <property type="term" value="F:high voltage-gated calcium channel activity"/>
    <property type="evidence" value="ECO:0000304"/>
    <property type="project" value="MGI"/>
</dbReference>
<dbReference type="GO" id="GO:0070588">
    <property type="term" value="P:calcium ion transmembrane transport"/>
    <property type="evidence" value="ECO:0000250"/>
    <property type="project" value="BHF-UCL"/>
</dbReference>
<dbReference type="GO" id="GO:0061577">
    <property type="term" value="P:calcium ion transmembrane transport via high voltage-gated calcium channel"/>
    <property type="evidence" value="ECO:0000250"/>
    <property type="project" value="BHF-UCL"/>
</dbReference>
<dbReference type="GO" id="GO:0060402">
    <property type="term" value="P:calcium ion transport into cytosol"/>
    <property type="evidence" value="ECO:0000250"/>
    <property type="project" value="BHF-UCL"/>
</dbReference>
<dbReference type="GO" id="GO:1901843">
    <property type="term" value="P:positive regulation of high voltage-gated calcium channel activity"/>
    <property type="evidence" value="ECO:0000250"/>
    <property type="project" value="UniProtKB"/>
</dbReference>
<dbReference type="GO" id="GO:0072659">
    <property type="term" value="P:protein localization to plasma membrane"/>
    <property type="evidence" value="ECO:0000250"/>
    <property type="project" value="BHF-UCL"/>
</dbReference>
<dbReference type="GO" id="GO:0098903">
    <property type="term" value="P:regulation of membrane repolarization during action potential"/>
    <property type="evidence" value="ECO:0000250"/>
    <property type="project" value="BHF-UCL"/>
</dbReference>
<dbReference type="GO" id="GO:0050852">
    <property type="term" value="P:T cell receptor signaling pathway"/>
    <property type="evidence" value="ECO:0000315"/>
    <property type="project" value="MGI"/>
</dbReference>
<dbReference type="CDD" id="cd12042">
    <property type="entry name" value="SH3_CACNB3"/>
    <property type="match status" value="1"/>
</dbReference>
<dbReference type="FunFam" id="3.40.50.300:FF:000023">
    <property type="entry name" value="Voltage-dependent L-type calcium channel subunit beta-2"/>
    <property type="match status" value="1"/>
</dbReference>
<dbReference type="FunFam" id="2.30.30.40:FF:000049">
    <property type="entry name" value="Voltage-dependent L-type calcium channel subunit beta-3"/>
    <property type="match status" value="1"/>
</dbReference>
<dbReference type="Gene3D" id="3.40.50.300">
    <property type="entry name" value="P-loop containing nucleotide triphosphate hydrolases"/>
    <property type="match status" value="1"/>
</dbReference>
<dbReference type="Gene3D" id="2.30.30.40">
    <property type="entry name" value="SH3 Domains"/>
    <property type="match status" value="1"/>
</dbReference>
<dbReference type="InterPro" id="IPR046937">
    <property type="entry name" value="CAB1-4_N_A-dom"/>
</dbReference>
<dbReference type="InterPro" id="IPR035760">
    <property type="entry name" value="CACNB3_SH3"/>
</dbReference>
<dbReference type="InterPro" id="IPR008145">
    <property type="entry name" value="GK/Ca_channel_bsu"/>
</dbReference>
<dbReference type="InterPro" id="IPR027417">
    <property type="entry name" value="P-loop_NTPase"/>
</dbReference>
<dbReference type="InterPro" id="IPR036028">
    <property type="entry name" value="SH3-like_dom_sf"/>
</dbReference>
<dbReference type="InterPro" id="IPR001452">
    <property type="entry name" value="SH3_domain"/>
</dbReference>
<dbReference type="InterPro" id="IPR008079">
    <property type="entry name" value="VDCC_L_b3su"/>
</dbReference>
<dbReference type="InterPro" id="IPR000584">
    <property type="entry name" value="VDCC_L_bsu"/>
</dbReference>
<dbReference type="PANTHER" id="PTHR11824">
    <property type="entry name" value="VOLTAGE-DEPENDENT CALCIUM CHANNEL BETA SUBUNIT"/>
    <property type="match status" value="1"/>
</dbReference>
<dbReference type="Pfam" id="PF00625">
    <property type="entry name" value="Guanylate_kin"/>
    <property type="match status" value="1"/>
</dbReference>
<dbReference type="Pfam" id="PF12052">
    <property type="entry name" value="VGCC_beta4Aa_N"/>
    <property type="match status" value="1"/>
</dbReference>
<dbReference type="PRINTS" id="PR01626">
    <property type="entry name" value="LCACHANNELB"/>
</dbReference>
<dbReference type="PRINTS" id="PR01696">
    <property type="entry name" value="LCACHANNELB3"/>
</dbReference>
<dbReference type="SMART" id="SM00072">
    <property type="entry name" value="GuKc"/>
    <property type="match status" value="1"/>
</dbReference>
<dbReference type="SUPFAM" id="SSF52540">
    <property type="entry name" value="P-loop containing nucleoside triphosphate hydrolases"/>
    <property type="match status" value="1"/>
</dbReference>
<dbReference type="SUPFAM" id="SSF50044">
    <property type="entry name" value="SH3-domain"/>
    <property type="match status" value="1"/>
</dbReference>
<dbReference type="PROSITE" id="PS50002">
    <property type="entry name" value="SH3"/>
    <property type="match status" value="1"/>
</dbReference>
<keyword id="KW-0025">Alternative splicing</keyword>
<keyword id="KW-0106">Calcium</keyword>
<keyword id="KW-0107">Calcium channel</keyword>
<keyword id="KW-0109">Calcium transport</keyword>
<keyword id="KW-0963">Cytoplasm</keyword>
<keyword id="KW-0407">Ion channel</keyword>
<keyword id="KW-0406">Ion transport</keyword>
<keyword id="KW-0597">Phosphoprotein</keyword>
<keyword id="KW-1185">Reference proteome</keyword>
<keyword id="KW-0728">SH3 domain</keyword>
<keyword id="KW-0813">Transport</keyword>
<keyword id="KW-0851">Voltage-gated channel</keyword>
<gene>
    <name type="primary">Cacnb3</name>
    <name type="synonym">Cacnlb3</name>
</gene>